<accession>Q8TXD5</accession>
<organism>
    <name type="scientific">Methanopyrus kandleri (strain AV19 / DSM 6324 / JCM 9639 / NBRC 100938)</name>
    <dbReference type="NCBI Taxonomy" id="190192"/>
    <lineage>
        <taxon>Archaea</taxon>
        <taxon>Methanobacteriati</taxon>
        <taxon>Methanobacteriota</taxon>
        <taxon>Methanomada group</taxon>
        <taxon>Methanopyri</taxon>
        <taxon>Methanopyrales</taxon>
        <taxon>Methanopyraceae</taxon>
        <taxon>Methanopyrus</taxon>
    </lineage>
</organism>
<protein>
    <recommendedName>
        <fullName evidence="1">Translation initiation factor 5A</fullName>
    </recommendedName>
    <alternativeName>
        <fullName evidence="1">Hypusine-containing protein</fullName>
    </alternativeName>
    <alternativeName>
        <fullName evidence="1">eIF-5A</fullName>
    </alternativeName>
</protein>
<reference key="1">
    <citation type="journal article" date="2002" name="Proc. Natl. Acad. Sci. U.S.A.">
        <title>The complete genome of hyperthermophile Methanopyrus kandleri AV19 and monophyly of archaeal methanogens.</title>
        <authorList>
            <person name="Slesarev A.I."/>
            <person name="Mezhevaya K.V."/>
            <person name="Makarova K.S."/>
            <person name="Polushin N.N."/>
            <person name="Shcherbinina O.V."/>
            <person name="Shakhova V.V."/>
            <person name="Belova G.I."/>
            <person name="Aravind L."/>
            <person name="Natale D.A."/>
            <person name="Rogozin I.B."/>
            <person name="Tatusov R.L."/>
            <person name="Wolf Y.I."/>
            <person name="Stetter K.O."/>
            <person name="Malykh A.G."/>
            <person name="Koonin E.V."/>
            <person name="Kozyavkin S.A."/>
        </authorList>
    </citation>
    <scope>NUCLEOTIDE SEQUENCE [LARGE SCALE GENOMIC DNA]</scope>
    <source>
        <strain>AV19 / DSM 6324 / JCM 9639 / NBRC 100938</strain>
    </source>
</reference>
<proteinExistence type="inferred from homology"/>
<name>IF5A_METKA</name>
<comment type="function">
    <text evidence="1">Functions by promoting the formation of the first peptide bond.</text>
</comment>
<comment type="subcellular location">
    <subcellularLocation>
        <location evidence="1">Cytoplasm</location>
    </subcellularLocation>
</comment>
<comment type="similarity">
    <text evidence="1">Belongs to the eIF-5A family.</text>
</comment>
<keyword id="KW-0963">Cytoplasm</keyword>
<keyword id="KW-0385">Hypusine</keyword>
<keyword id="KW-0396">Initiation factor</keyword>
<keyword id="KW-0648">Protein biosynthesis</keyword>
<keyword id="KW-1185">Reference proteome</keyword>
<evidence type="ECO:0000255" key="1">
    <source>
        <dbReference type="HAMAP-Rule" id="MF_00085"/>
    </source>
</evidence>
<feature type="chain" id="PRO_0000142494" description="Translation initiation factor 5A">
    <location>
        <begin position="1"/>
        <end position="136"/>
    </location>
</feature>
<feature type="modified residue" description="Hypusine" evidence="1">
    <location>
        <position position="38"/>
    </location>
</feature>
<dbReference type="EMBL" id="AE009439">
    <property type="protein sequence ID" value="AAM01953.1"/>
    <property type="molecule type" value="Genomic_DNA"/>
</dbReference>
<dbReference type="SMR" id="Q8TXD5"/>
<dbReference type="FunCoup" id="Q8TXD5">
    <property type="interactions" value="107"/>
</dbReference>
<dbReference type="STRING" id="190192.MK0739"/>
<dbReference type="PaxDb" id="190192-MK0739"/>
<dbReference type="EnsemblBacteria" id="AAM01953">
    <property type="protein sequence ID" value="AAM01953"/>
    <property type="gene ID" value="MK0739"/>
</dbReference>
<dbReference type="KEGG" id="mka:MK0739"/>
<dbReference type="PATRIC" id="fig|190192.8.peg.779"/>
<dbReference type="HOGENOM" id="CLU_102600_3_0_2"/>
<dbReference type="InParanoid" id="Q8TXD5"/>
<dbReference type="Proteomes" id="UP000001826">
    <property type="component" value="Chromosome"/>
</dbReference>
<dbReference type="GO" id="GO:0005737">
    <property type="term" value="C:cytoplasm"/>
    <property type="evidence" value="ECO:0007669"/>
    <property type="project" value="UniProtKB-SubCell"/>
</dbReference>
<dbReference type="GO" id="GO:0043022">
    <property type="term" value="F:ribosome binding"/>
    <property type="evidence" value="ECO:0007669"/>
    <property type="project" value="InterPro"/>
</dbReference>
<dbReference type="GO" id="GO:0003723">
    <property type="term" value="F:RNA binding"/>
    <property type="evidence" value="ECO:0007669"/>
    <property type="project" value="InterPro"/>
</dbReference>
<dbReference type="GO" id="GO:0003746">
    <property type="term" value="F:translation elongation factor activity"/>
    <property type="evidence" value="ECO:0007669"/>
    <property type="project" value="InterPro"/>
</dbReference>
<dbReference type="GO" id="GO:0003743">
    <property type="term" value="F:translation initiation factor activity"/>
    <property type="evidence" value="ECO:0007669"/>
    <property type="project" value="UniProtKB-UniRule"/>
</dbReference>
<dbReference type="GO" id="GO:0045901">
    <property type="term" value="P:positive regulation of translational elongation"/>
    <property type="evidence" value="ECO:0007669"/>
    <property type="project" value="InterPro"/>
</dbReference>
<dbReference type="GO" id="GO:0045905">
    <property type="term" value="P:positive regulation of translational termination"/>
    <property type="evidence" value="ECO:0007669"/>
    <property type="project" value="InterPro"/>
</dbReference>
<dbReference type="CDD" id="cd04467">
    <property type="entry name" value="S1_aIF5A"/>
    <property type="match status" value="1"/>
</dbReference>
<dbReference type="FunFam" id="2.30.30.30:FF:000038">
    <property type="entry name" value="Translation initiation factor 5A"/>
    <property type="match status" value="1"/>
</dbReference>
<dbReference type="FunFam" id="2.40.50.140:FF:000334">
    <property type="entry name" value="Translation initiation factor 5A"/>
    <property type="match status" value="1"/>
</dbReference>
<dbReference type="Gene3D" id="2.30.30.30">
    <property type="match status" value="1"/>
</dbReference>
<dbReference type="Gene3D" id="2.40.50.140">
    <property type="entry name" value="Nucleic acid-binding proteins"/>
    <property type="match status" value="1"/>
</dbReference>
<dbReference type="HAMAP" id="MF_00085">
    <property type="entry name" value="eIF_5A"/>
    <property type="match status" value="1"/>
</dbReference>
<dbReference type="InterPro" id="IPR001884">
    <property type="entry name" value="IF5A-like"/>
</dbReference>
<dbReference type="InterPro" id="IPR048670">
    <property type="entry name" value="IF5A-like_N"/>
</dbReference>
<dbReference type="InterPro" id="IPR012340">
    <property type="entry name" value="NA-bd_OB-fold"/>
</dbReference>
<dbReference type="InterPro" id="IPR014722">
    <property type="entry name" value="Rib_uL2_dom2"/>
</dbReference>
<dbReference type="InterPro" id="IPR019769">
    <property type="entry name" value="Trans_elong_IF5A_hypusine_site"/>
</dbReference>
<dbReference type="InterPro" id="IPR022847">
    <property type="entry name" value="Transl_elong_IF5A_arc"/>
</dbReference>
<dbReference type="InterPro" id="IPR020189">
    <property type="entry name" value="Transl_elong_IF5A_C"/>
</dbReference>
<dbReference type="InterPro" id="IPR008991">
    <property type="entry name" value="Translation_prot_SH3-like_sf"/>
</dbReference>
<dbReference type="NCBIfam" id="TIGR00037">
    <property type="entry name" value="eIF_5A"/>
    <property type="match status" value="1"/>
</dbReference>
<dbReference type="NCBIfam" id="NF003076">
    <property type="entry name" value="PRK03999.1"/>
    <property type="match status" value="1"/>
</dbReference>
<dbReference type="PANTHER" id="PTHR11673">
    <property type="entry name" value="TRANSLATION INITIATION FACTOR 5A FAMILY MEMBER"/>
    <property type="match status" value="1"/>
</dbReference>
<dbReference type="Pfam" id="PF01287">
    <property type="entry name" value="eIF-5a"/>
    <property type="match status" value="1"/>
</dbReference>
<dbReference type="Pfam" id="PF21485">
    <property type="entry name" value="IF5A-like_N"/>
    <property type="match status" value="1"/>
</dbReference>
<dbReference type="PIRSF" id="PIRSF003025">
    <property type="entry name" value="eIF5A"/>
    <property type="match status" value="1"/>
</dbReference>
<dbReference type="SMART" id="SM01376">
    <property type="entry name" value="eIF-5a"/>
    <property type="match status" value="1"/>
</dbReference>
<dbReference type="SUPFAM" id="SSF50249">
    <property type="entry name" value="Nucleic acid-binding proteins"/>
    <property type="match status" value="1"/>
</dbReference>
<dbReference type="SUPFAM" id="SSF50104">
    <property type="entry name" value="Translation proteins SH3-like domain"/>
    <property type="match status" value="1"/>
</dbReference>
<dbReference type="PROSITE" id="PS00302">
    <property type="entry name" value="IF5A_HYPUSINE"/>
    <property type="match status" value="1"/>
</dbReference>
<sequence length="136" mass="15179">MDVAVKKVEVRQLKKGKYIMIDDEPCKIVEYTTSSPGKHGSAKARIVAVGLFDGKKRTLTKPVDAKVDVPVIERKTAQVVSDMGDTVQLMDMETYETFEVQKPEDEELASQLEPGTMVEYMEAAGKRKIVGIKEEE</sequence>
<gene>
    <name evidence="1" type="primary">eif5a</name>
    <name type="ordered locus">MK0739</name>
</gene>